<name>FTE46_BOTJA</name>
<dbReference type="EMBL" id="AF294836">
    <property type="protein sequence ID" value="AAG09055.1"/>
    <property type="molecule type" value="mRNA"/>
</dbReference>
<dbReference type="SMR" id="Q9DGI0"/>
<dbReference type="MEROPS" id="I25.026"/>
<dbReference type="MEROPS" id="I25.042"/>
<dbReference type="iPTMnet" id="Q9DGI0"/>
<dbReference type="GO" id="GO:0072562">
    <property type="term" value="C:blood microparticle"/>
    <property type="evidence" value="ECO:0007669"/>
    <property type="project" value="TreeGrafter"/>
</dbReference>
<dbReference type="GO" id="GO:0031012">
    <property type="term" value="C:extracellular matrix"/>
    <property type="evidence" value="ECO:0007669"/>
    <property type="project" value="TreeGrafter"/>
</dbReference>
<dbReference type="GO" id="GO:0004869">
    <property type="term" value="F:cysteine-type endopeptidase inhibitor activity"/>
    <property type="evidence" value="ECO:0007669"/>
    <property type="project" value="InterPro"/>
</dbReference>
<dbReference type="GO" id="GO:0008191">
    <property type="term" value="F:metalloendopeptidase inhibitor activity"/>
    <property type="evidence" value="ECO:0000314"/>
    <property type="project" value="UniProtKB"/>
</dbReference>
<dbReference type="GO" id="GO:0045861">
    <property type="term" value="P:negative regulation of proteolysis"/>
    <property type="evidence" value="ECO:0000314"/>
    <property type="project" value="UniProtKB"/>
</dbReference>
<dbReference type="CDD" id="cd00042">
    <property type="entry name" value="CY"/>
    <property type="match status" value="2"/>
</dbReference>
<dbReference type="FunFam" id="3.10.450.10:FF:000002">
    <property type="entry name" value="Kininogen 1"/>
    <property type="match status" value="1"/>
</dbReference>
<dbReference type="Gene3D" id="3.10.450.10">
    <property type="match status" value="2"/>
</dbReference>
<dbReference type="InterPro" id="IPR000010">
    <property type="entry name" value="Cystatin_dom"/>
</dbReference>
<dbReference type="InterPro" id="IPR025760">
    <property type="entry name" value="Cystatin_Fetuin_A"/>
</dbReference>
<dbReference type="InterPro" id="IPR046350">
    <property type="entry name" value="Cystatin_sf"/>
</dbReference>
<dbReference type="InterPro" id="IPR050735">
    <property type="entry name" value="Kininogen_Fetuin_HRG"/>
</dbReference>
<dbReference type="InterPro" id="IPR001363">
    <property type="entry name" value="Prot_inh_fetuin_CS"/>
</dbReference>
<dbReference type="PANTHER" id="PTHR13814:SF6">
    <property type="entry name" value="ALPHA-2-HS-GLYCOPROTEIN"/>
    <property type="match status" value="1"/>
</dbReference>
<dbReference type="PANTHER" id="PTHR13814">
    <property type="entry name" value="FETUIN"/>
    <property type="match status" value="1"/>
</dbReference>
<dbReference type="Pfam" id="PF00031">
    <property type="entry name" value="Cystatin"/>
    <property type="match status" value="1"/>
</dbReference>
<dbReference type="SMART" id="SM00043">
    <property type="entry name" value="CY"/>
    <property type="match status" value="2"/>
</dbReference>
<dbReference type="SUPFAM" id="SSF54403">
    <property type="entry name" value="Cystatin/monellin"/>
    <property type="match status" value="2"/>
</dbReference>
<dbReference type="PROSITE" id="PS51529">
    <property type="entry name" value="CYSTATIN_FETUIN_A"/>
    <property type="match status" value="2"/>
</dbReference>
<dbReference type="PROSITE" id="PS01254">
    <property type="entry name" value="FETUIN_1"/>
    <property type="match status" value="1"/>
</dbReference>
<dbReference type="PROSITE" id="PS01255">
    <property type="entry name" value="FETUIN_2"/>
    <property type="match status" value="1"/>
</dbReference>
<protein>
    <recommendedName>
        <fullName>Antihemorrhagic factor BJ46a</fullName>
    </recommendedName>
    <alternativeName>
        <fullName>Metalloproteinase inhibitor</fullName>
    </alternativeName>
</protein>
<sequence>MNSLVALVLLGQIIGSTLSSQVRGDLECDEKDAKEWTDTGVRYINEHKLHGYKYALNVIKNIVVVPWDGDWVAVFLKLNLLETECHVLDPTPVKNCTVRPQHNHAVEMDCDVKIMFNVDTFKEDVFAKCHSTPDSVENVRRNCPKCPILLPSNNPQVVDSVEYVLNKHNEKLSDHVYEVLEISRGQHKYEPEAYYVEFAIVEVNCTAQELHDDHHHCHPNTAGEDHIGFCRATVFRSHASLEKPKDEQFESDCVILHVKEGHAHSHLIQQHVEKDSISPEHNNTALNFVHPHNDTSTSHESHEHLAEVPVAFVKKELPKDISDRHTTPVKGCPGKVHHFEL</sequence>
<feature type="signal peptide" evidence="5">
    <location>
        <begin position="1"/>
        <end position="19"/>
    </location>
</feature>
<feature type="chain" id="PRO_0000008902" description="Antihemorrhagic factor BJ46a">
    <location>
        <begin position="20"/>
        <end position="341"/>
    </location>
</feature>
<feature type="domain" description="Cystatin fetuin-A-type 1" evidence="4">
    <location>
        <begin position="22"/>
        <end position="130"/>
    </location>
</feature>
<feature type="domain" description="Cystatin fetuin-A-type 2" evidence="4">
    <location>
        <begin position="141"/>
        <end position="254"/>
    </location>
</feature>
<feature type="short sequence motif" description="Cell attachment site" evidence="3">
    <location>
        <begin position="23"/>
        <end position="25"/>
    </location>
</feature>
<feature type="site" description="Cleavage; by trypsin" evidence="1">
    <location>
        <begin position="140"/>
        <end position="141"/>
    </location>
</feature>
<feature type="glycosylation site" description="N-linked (GlcNAc...) asparagine" evidence="5">
    <location>
        <position position="95"/>
    </location>
</feature>
<feature type="glycosylation site" description="N-linked (GlcNAc...) asparagine" evidence="6">
    <location>
        <position position="204"/>
    </location>
</feature>
<feature type="glycosylation site" description="N-linked (GlcNAc...) asparagine" evidence="5">
    <location>
        <position position="282"/>
    </location>
</feature>
<feature type="glycosylation site" description="N-linked (GlcNAc...) asparagine" evidence="6">
    <location>
        <position position="293"/>
    </location>
</feature>
<feature type="disulfide bond" evidence="4">
    <location>
        <begin position="28"/>
        <end position="332"/>
    </location>
</feature>
<feature type="disulfide bond" evidence="2 4">
    <location>
        <begin position="85"/>
        <end position="96"/>
    </location>
</feature>
<feature type="disulfide bond" evidence="2 4">
    <location>
        <begin position="110"/>
        <end position="129"/>
    </location>
</feature>
<feature type="disulfide bond" evidence="2 4">
    <location>
        <begin position="143"/>
        <end position="146"/>
    </location>
</feature>
<feature type="disulfide bond" evidence="2 4">
    <location>
        <begin position="205"/>
        <end position="217"/>
    </location>
</feature>
<feature type="disulfide bond" evidence="2 4">
    <location>
        <begin position="230"/>
        <end position="253"/>
    </location>
</feature>
<comment type="function">
    <text evidence="5">Potent inhibitor of hemorrhagic activity but also proteolytic activities of atrolysin C and jararhagin. Inhibition occurs by formation of a non-covalent complex between BJ46a and the proteinases at their metalloproteinase domains.</text>
</comment>
<comment type="subunit">
    <text evidence="5">Homodimer.</text>
</comment>
<comment type="subcellular location">
    <subcellularLocation>
        <location>Secreted</location>
    </subcellularLocation>
</comment>
<comment type="tissue specificity">
    <text>Expressed by the liver.</text>
</comment>
<comment type="mass spectrometry"/>
<comment type="similarity">
    <text evidence="4 6">Belongs to the fetuin family.</text>
</comment>
<organism evidence="7">
    <name type="scientific">Bothrops jararaca</name>
    <name type="common">Jararaca</name>
    <name type="synonym">Bothrops jajaraca</name>
    <dbReference type="NCBI Taxonomy" id="8724"/>
    <lineage>
        <taxon>Eukaryota</taxon>
        <taxon>Metazoa</taxon>
        <taxon>Chordata</taxon>
        <taxon>Craniata</taxon>
        <taxon>Vertebrata</taxon>
        <taxon>Euteleostomi</taxon>
        <taxon>Lepidosauria</taxon>
        <taxon>Squamata</taxon>
        <taxon>Bifurcata</taxon>
        <taxon>Unidentata</taxon>
        <taxon>Episquamata</taxon>
        <taxon>Toxicofera</taxon>
        <taxon>Serpentes</taxon>
        <taxon>Colubroidea</taxon>
        <taxon>Viperidae</taxon>
        <taxon>Crotalinae</taxon>
        <taxon>Bothrops</taxon>
    </lineage>
</organism>
<reference evidence="6" key="1">
    <citation type="journal article" date="2001" name="Eur. J. Biochem.">
        <title>BJ46a, a snake venom metalloproteinase inhibitor. Isolation, characterization, cloning and insights into its mechanism of action.</title>
        <authorList>
            <person name="Valente R.H."/>
            <person name="Dragulev B."/>
            <person name="Perales J."/>
            <person name="Fox J.W."/>
            <person name="Domont G.B."/>
        </authorList>
    </citation>
    <scope>NUCLEOTIDE SEQUENCE [MRNA]</scope>
    <scope>PROTEIN SEQUENCE OF 20-191; 212-224; 252-293 AND 307-341</scope>
    <scope>FUNCTION</scope>
    <scope>GLYCOSYLATION AT ASN-95 AND ASN-282</scope>
    <scope>SUBUNIT</scope>
    <scope>MASS SPECTROMETRY</scope>
    <source>
        <tissue evidence="5">Liver</tissue>
    </source>
</reference>
<evidence type="ECO:0000250" key="1"/>
<evidence type="ECO:0000250" key="2">
    <source>
        <dbReference type="UniProtKB" id="P29695"/>
    </source>
</evidence>
<evidence type="ECO:0000255" key="3"/>
<evidence type="ECO:0000255" key="4">
    <source>
        <dbReference type="PROSITE-ProRule" id="PRU00861"/>
    </source>
</evidence>
<evidence type="ECO:0000269" key="5">
    <source>
    </source>
</evidence>
<evidence type="ECO:0000305" key="6"/>
<evidence type="ECO:0000312" key="7">
    <source>
        <dbReference type="EMBL" id="AAG09055.1"/>
    </source>
</evidence>
<keyword id="KW-0903">Direct protein sequencing</keyword>
<keyword id="KW-1015">Disulfide bond</keyword>
<keyword id="KW-0325">Glycoprotein</keyword>
<keyword id="KW-0481">Metalloenzyme inhibitor</keyword>
<keyword id="KW-0483">Metalloprotease inhibitor</keyword>
<keyword id="KW-0646">Protease inhibitor</keyword>
<keyword id="KW-0677">Repeat</keyword>
<keyword id="KW-0964">Secreted</keyword>
<keyword id="KW-0732">Signal</keyword>
<proteinExistence type="evidence at protein level"/>
<accession>Q9DGI0</accession>